<accession>Q1GMQ8</accession>
<protein>
    <recommendedName>
        <fullName evidence="1">Phosphatidylserine decarboxylase proenzyme</fullName>
        <ecNumber evidence="1">4.1.1.65</ecNumber>
    </recommendedName>
    <component>
        <recommendedName>
            <fullName evidence="1">Phosphatidylserine decarboxylase alpha chain</fullName>
        </recommendedName>
    </component>
    <component>
        <recommendedName>
            <fullName evidence="1">Phosphatidylserine decarboxylase beta chain</fullName>
        </recommendedName>
    </component>
</protein>
<gene>
    <name evidence="1" type="primary">psd</name>
    <name type="ordered locus">TM1040_3084</name>
</gene>
<feature type="chain" id="PRO_0000262271" description="Phosphatidylserine decarboxylase beta chain" evidence="1">
    <location>
        <begin position="1"/>
        <end position="187"/>
    </location>
</feature>
<feature type="chain" id="PRO_0000262272" description="Phosphatidylserine decarboxylase alpha chain" evidence="1">
    <location>
        <begin position="188"/>
        <end position="233"/>
    </location>
</feature>
<feature type="active site" description="Schiff-base intermediate with substrate; via pyruvic acid" evidence="1">
    <location>
        <position position="188"/>
    </location>
</feature>
<feature type="site" description="Cleavage (non-hydrolytic); by autocatalysis" evidence="1">
    <location>
        <begin position="187"/>
        <end position="188"/>
    </location>
</feature>
<feature type="modified residue" description="Pyruvic acid (Ser); by autocatalysis" evidence="1">
    <location>
        <position position="188"/>
    </location>
</feature>
<evidence type="ECO:0000255" key="1">
    <source>
        <dbReference type="HAMAP-Rule" id="MF_00664"/>
    </source>
</evidence>
<sequence length="233" mass="25160">MNMIGTFIKPMHPEGRKFVAIFAAVTFGLFLLTPILGWIGVGLTVWCYYFFRDPERVTPARPGLVISPADGVVSLIEPAVPPAELGLPDVPLTRVSVFMSVFNCHVNRAPVAGEVTAVAYRPGKFFNASLDKASADNERNSLAIRMEDGRDLAVVQIAGLVARRIVCFVKPGAQLGRGERFGLIRFGSRLDVYLPEGVSPQVEIGQTMIAGETVIAELGTGVHTDQNKGELHG</sequence>
<keyword id="KW-1003">Cell membrane</keyword>
<keyword id="KW-0210">Decarboxylase</keyword>
<keyword id="KW-0444">Lipid biosynthesis</keyword>
<keyword id="KW-0443">Lipid metabolism</keyword>
<keyword id="KW-0456">Lyase</keyword>
<keyword id="KW-0472">Membrane</keyword>
<keyword id="KW-0594">Phospholipid biosynthesis</keyword>
<keyword id="KW-1208">Phospholipid metabolism</keyword>
<keyword id="KW-0614">Plasmid</keyword>
<keyword id="KW-0670">Pyruvate</keyword>
<keyword id="KW-1185">Reference proteome</keyword>
<keyword id="KW-0865">Zymogen</keyword>
<reference key="1">
    <citation type="submission" date="2006-05" db="EMBL/GenBank/DDBJ databases">
        <title>Complete sequence of megaplasmid of Silicibacter sp. TM1040.</title>
        <authorList>
            <consortium name="US DOE Joint Genome Institute"/>
            <person name="Copeland A."/>
            <person name="Lucas S."/>
            <person name="Lapidus A."/>
            <person name="Barry K."/>
            <person name="Detter J.C."/>
            <person name="Glavina del Rio T."/>
            <person name="Hammon N."/>
            <person name="Israni S."/>
            <person name="Dalin E."/>
            <person name="Tice H."/>
            <person name="Pitluck S."/>
            <person name="Brettin T."/>
            <person name="Bruce D."/>
            <person name="Han C."/>
            <person name="Tapia R."/>
            <person name="Goodwin L."/>
            <person name="Thompson L.S."/>
            <person name="Gilna P."/>
            <person name="Schmutz J."/>
            <person name="Larimer F."/>
            <person name="Land M."/>
            <person name="Hauser L."/>
            <person name="Kyrpides N."/>
            <person name="Kim E."/>
            <person name="Belas R."/>
            <person name="Moran M.A."/>
            <person name="Buchan A."/>
            <person name="Gonzalez J.M."/>
            <person name="Schell M.A."/>
            <person name="Sun F."/>
            <person name="Richardson P."/>
        </authorList>
    </citation>
    <scope>NUCLEOTIDE SEQUENCE [LARGE SCALE GENOMIC DNA]</scope>
    <source>
        <strain>TM1040</strain>
    </source>
</reference>
<name>PSD_RUEST</name>
<comment type="function">
    <text evidence="1">Catalyzes the formation of phosphatidylethanolamine (PtdEtn) from phosphatidylserine (PtdSer).</text>
</comment>
<comment type="catalytic activity">
    <reaction evidence="1">
        <text>a 1,2-diacyl-sn-glycero-3-phospho-L-serine + H(+) = a 1,2-diacyl-sn-glycero-3-phosphoethanolamine + CO2</text>
        <dbReference type="Rhea" id="RHEA:20828"/>
        <dbReference type="ChEBI" id="CHEBI:15378"/>
        <dbReference type="ChEBI" id="CHEBI:16526"/>
        <dbReference type="ChEBI" id="CHEBI:57262"/>
        <dbReference type="ChEBI" id="CHEBI:64612"/>
        <dbReference type="EC" id="4.1.1.65"/>
    </reaction>
</comment>
<comment type="cofactor">
    <cofactor evidence="1">
        <name>pyruvate</name>
        <dbReference type="ChEBI" id="CHEBI:15361"/>
    </cofactor>
    <text evidence="1">Binds 1 pyruvoyl group covalently per subunit.</text>
</comment>
<comment type="pathway">
    <text evidence="1">Phospholipid metabolism; phosphatidylethanolamine biosynthesis; phosphatidylethanolamine from CDP-diacylglycerol: step 2/2.</text>
</comment>
<comment type="subunit">
    <text evidence="1">Heterodimer of a large membrane-associated beta subunit and a small pyruvoyl-containing alpha subunit.</text>
</comment>
<comment type="subcellular location">
    <subcellularLocation>
        <location evidence="1">Cell membrane</location>
        <topology evidence="1">Peripheral membrane protein</topology>
    </subcellularLocation>
</comment>
<comment type="PTM">
    <text evidence="1">Is synthesized initially as an inactive proenzyme. Formation of the active enzyme involves a self-maturation process in which the active site pyruvoyl group is generated from an internal serine residue via an autocatalytic post-translational modification. Two non-identical subunits are generated from the proenzyme in this reaction, and the pyruvate is formed at the N-terminus of the alpha chain, which is derived from the carboxyl end of the proenzyme. The post-translation cleavage follows an unusual pathway, termed non-hydrolytic serinolysis, in which the side chain hydroxyl group of the serine supplies its oxygen atom to form the C-terminus of the beta chain, while the remainder of the serine residue undergoes an oxidative deamination to produce ammonia and the pyruvoyl prosthetic group on the alpha chain.</text>
</comment>
<comment type="similarity">
    <text evidence="1">Belongs to the phosphatidylserine decarboxylase family. PSD-A subfamily.</text>
</comment>
<geneLocation type="plasmid">
    <name>megaplasmid TM1040</name>
</geneLocation>
<proteinExistence type="inferred from homology"/>
<organism>
    <name type="scientific">Ruegeria sp. (strain TM1040)</name>
    <name type="common">Silicibacter sp.</name>
    <dbReference type="NCBI Taxonomy" id="292414"/>
    <lineage>
        <taxon>Bacteria</taxon>
        <taxon>Pseudomonadati</taxon>
        <taxon>Pseudomonadota</taxon>
        <taxon>Alphaproteobacteria</taxon>
        <taxon>Rhodobacterales</taxon>
        <taxon>Roseobacteraceae</taxon>
        <taxon>Ruegeria</taxon>
    </lineage>
</organism>
<dbReference type="EC" id="4.1.1.65" evidence="1"/>
<dbReference type="EMBL" id="CP000376">
    <property type="protein sequence ID" value="ABF62058.1"/>
    <property type="molecule type" value="Genomic_DNA"/>
</dbReference>
<dbReference type="KEGG" id="sit:TM1040_3084"/>
<dbReference type="HOGENOM" id="CLU_072492_0_0_5"/>
<dbReference type="OrthoDB" id="9790893at2"/>
<dbReference type="UniPathway" id="UPA00558">
    <property type="reaction ID" value="UER00616"/>
</dbReference>
<dbReference type="Proteomes" id="UP000000636">
    <property type="component" value="Plasmid megaplasmid TM1040"/>
</dbReference>
<dbReference type="GO" id="GO:0005886">
    <property type="term" value="C:plasma membrane"/>
    <property type="evidence" value="ECO:0007669"/>
    <property type="project" value="UniProtKB-SubCell"/>
</dbReference>
<dbReference type="GO" id="GO:0004609">
    <property type="term" value="F:phosphatidylserine decarboxylase activity"/>
    <property type="evidence" value="ECO:0007669"/>
    <property type="project" value="UniProtKB-UniRule"/>
</dbReference>
<dbReference type="GO" id="GO:0006646">
    <property type="term" value="P:phosphatidylethanolamine biosynthetic process"/>
    <property type="evidence" value="ECO:0007669"/>
    <property type="project" value="UniProtKB-UniRule"/>
</dbReference>
<dbReference type="HAMAP" id="MF_00664">
    <property type="entry name" value="PS_decarb_PSD_A"/>
    <property type="match status" value="1"/>
</dbReference>
<dbReference type="InterPro" id="IPR003817">
    <property type="entry name" value="PS_Dcarbxylase"/>
</dbReference>
<dbReference type="InterPro" id="IPR033175">
    <property type="entry name" value="PSD-A"/>
</dbReference>
<dbReference type="NCBIfam" id="NF003677">
    <property type="entry name" value="PRK05305.1-1"/>
    <property type="match status" value="1"/>
</dbReference>
<dbReference type="NCBIfam" id="NF003678">
    <property type="entry name" value="PRK05305.1-2"/>
    <property type="match status" value="1"/>
</dbReference>
<dbReference type="NCBIfam" id="NF003679">
    <property type="entry name" value="PRK05305.1-3"/>
    <property type="match status" value="1"/>
</dbReference>
<dbReference type="NCBIfam" id="NF003685">
    <property type="entry name" value="PRK05305.2-5"/>
    <property type="match status" value="1"/>
</dbReference>
<dbReference type="PANTHER" id="PTHR35809">
    <property type="entry name" value="ARCHAETIDYLSERINE DECARBOXYLASE PROENZYME-RELATED"/>
    <property type="match status" value="1"/>
</dbReference>
<dbReference type="PANTHER" id="PTHR35809:SF1">
    <property type="entry name" value="ARCHAETIDYLSERINE DECARBOXYLASE PROENZYME-RELATED"/>
    <property type="match status" value="1"/>
</dbReference>
<dbReference type="Pfam" id="PF02666">
    <property type="entry name" value="PS_Dcarbxylase"/>
    <property type="match status" value="1"/>
</dbReference>